<name>DNAJ_TRIV2</name>
<protein>
    <recommendedName>
        <fullName evidence="1">Chaperone protein DnaJ</fullName>
    </recommendedName>
</protein>
<proteinExistence type="inferred from homology"/>
<feature type="chain" id="PRO_1000085141" description="Chaperone protein DnaJ">
    <location>
        <begin position="1"/>
        <end position="376"/>
    </location>
</feature>
<feature type="domain" description="J" evidence="1">
    <location>
        <begin position="4"/>
        <end position="68"/>
    </location>
</feature>
<feature type="repeat" description="CXXCXGXG motif">
    <location>
        <begin position="149"/>
        <end position="156"/>
    </location>
</feature>
<feature type="repeat" description="CXXCXGXG motif">
    <location>
        <begin position="166"/>
        <end position="173"/>
    </location>
</feature>
<feature type="repeat" description="CXXCXGXG motif">
    <location>
        <begin position="192"/>
        <end position="199"/>
    </location>
</feature>
<feature type="repeat" description="CXXCXGXG motif">
    <location>
        <begin position="206"/>
        <end position="213"/>
    </location>
</feature>
<feature type="zinc finger region" description="CR-type" evidence="1">
    <location>
        <begin position="136"/>
        <end position="218"/>
    </location>
</feature>
<feature type="region of interest" description="Disordered" evidence="2">
    <location>
        <begin position="102"/>
        <end position="121"/>
    </location>
</feature>
<feature type="binding site" evidence="1">
    <location>
        <position position="149"/>
    </location>
    <ligand>
        <name>Zn(2+)</name>
        <dbReference type="ChEBI" id="CHEBI:29105"/>
        <label>1</label>
    </ligand>
</feature>
<feature type="binding site" evidence="1">
    <location>
        <position position="152"/>
    </location>
    <ligand>
        <name>Zn(2+)</name>
        <dbReference type="ChEBI" id="CHEBI:29105"/>
        <label>1</label>
    </ligand>
</feature>
<feature type="binding site" evidence="1">
    <location>
        <position position="166"/>
    </location>
    <ligand>
        <name>Zn(2+)</name>
        <dbReference type="ChEBI" id="CHEBI:29105"/>
        <label>2</label>
    </ligand>
</feature>
<feature type="binding site" evidence="1">
    <location>
        <position position="169"/>
    </location>
    <ligand>
        <name>Zn(2+)</name>
        <dbReference type="ChEBI" id="CHEBI:29105"/>
        <label>2</label>
    </ligand>
</feature>
<feature type="binding site" evidence="1">
    <location>
        <position position="192"/>
    </location>
    <ligand>
        <name>Zn(2+)</name>
        <dbReference type="ChEBI" id="CHEBI:29105"/>
        <label>2</label>
    </ligand>
</feature>
<feature type="binding site" evidence="1">
    <location>
        <position position="195"/>
    </location>
    <ligand>
        <name>Zn(2+)</name>
        <dbReference type="ChEBI" id="CHEBI:29105"/>
        <label>2</label>
    </ligand>
</feature>
<feature type="binding site" evidence="1">
    <location>
        <position position="206"/>
    </location>
    <ligand>
        <name>Zn(2+)</name>
        <dbReference type="ChEBI" id="CHEBI:29105"/>
        <label>1</label>
    </ligand>
</feature>
<feature type="binding site" evidence="1">
    <location>
        <position position="209"/>
    </location>
    <ligand>
        <name>Zn(2+)</name>
        <dbReference type="ChEBI" id="CHEBI:29105"/>
        <label>1</label>
    </ligand>
</feature>
<sequence length="376" mass="41056">MARDYYEILGVARDADKEEIKQAYRRLARKYHPDVNKEPGAEERFKEINRAYEVLSEPETRARYDRFGPEGVSGAGVGFQDMSDMGGFADIFESIFSGFAGGGMGGPTQQRRRGGPARGDDLRLDLKLDFREAVFGGEKEIRISHLETCETCSGSGAKPGTRPRTCSTCSGSGQVRRVTRTPFGSFTQVSTCPTCNGTGMVIEDKCDACDGKGTNQVTKKLKITIPAGVDNGTRLRIQQEGDAGQRGGPPGDLYVYLFVNEDEEFQRDGINVISEIKVSYLQAILGCRLEVNTVDGPVELIIPAGTQPNTVMKLENRGVPRLGNPVSRGDHLLTVLIDIPTKVIPEERELLEKLAKIKGDRTGKGGLEGFLGNLFK</sequence>
<gene>
    <name evidence="1" type="primary">dnaJ</name>
    <name type="ordered locus">Ava_0379</name>
</gene>
<dbReference type="EMBL" id="CP000117">
    <property type="protein sequence ID" value="ABA20005.1"/>
    <property type="molecule type" value="Genomic_DNA"/>
</dbReference>
<dbReference type="SMR" id="Q3MG81"/>
<dbReference type="STRING" id="240292.Ava_0379"/>
<dbReference type="KEGG" id="ava:Ava_0379"/>
<dbReference type="eggNOG" id="COG0484">
    <property type="taxonomic scope" value="Bacteria"/>
</dbReference>
<dbReference type="HOGENOM" id="CLU_017633_0_1_3"/>
<dbReference type="Proteomes" id="UP000002533">
    <property type="component" value="Chromosome"/>
</dbReference>
<dbReference type="GO" id="GO:0005737">
    <property type="term" value="C:cytoplasm"/>
    <property type="evidence" value="ECO:0007669"/>
    <property type="project" value="UniProtKB-SubCell"/>
</dbReference>
<dbReference type="GO" id="GO:0005524">
    <property type="term" value="F:ATP binding"/>
    <property type="evidence" value="ECO:0007669"/>
    <property type="project" value="InterPro"/>
</dbReference>
<dbReference type="GO" id="GO:0031072">
    <property type="term" value="F:heat shock protein binding"/>
    <property type="evidence" value="ECO:0007669"/>
    <property type="project" value="InterPro"/>
</dbReference>
<dbReference type="GO" id="GO:0051082">
    <property type="term" value="F:unfolded protein binding"/>
    <property type="evidence" value="ECO:0007669"/>
    <property type="project" value="UniProtKB-UniRule"/>
</dbReference>
<dbReference type="GO" id="GO:0008270">
    <property type="term" value="F:zinc ion binding"/>
    <property type="evidence" value="ECO:0007669"/>
    <property type="project" value="UniProtKB-UniRule"/>
</dbReference>
<dbReference type="GO" id="GO:0051085">
    <property type="term" value="P:chaperone cofactor-dependent protein refolding"/>
    <property type="evidence" value="ECO:0007669"/>
    <property type="project" value="TreeGrafter"/>
</dbReference>
<dbReference type="GO" id="GO:0006260">
    <property type="term" value="P:DNA replication"/>
    <property type="evidence" value="ECO:0007669"/>
    <property type="project" value="UniProtKB-KW"/>
</dbReference>
<dbReference type="GO" id="GO:0042026">
    <property type="term" value="P:protein refolding"/>
    <property type="evidence" value="ECO:0007669"/>
    <property type="project" value="TreeGrafter"/>
</dbReference>
<dbReference type="GO" id="GO:0009408">
    <property type="term" value="P:response to heat"/>
    <property type="evidence" value="ECO:0007669"/>
    <property type="project" value="InterPro"/>
</dbReference>
<dbReference type="CDD" id="cd06257">
    <property type="entry name" value="DnaJ"/>
    <property type="match status" value="1"/>
</dbReference>
<dbReference type="CDD" id="cd10747">
    <property type="entry name" value="DnaJ_C"/>
    <property type="match status" value="1"/>
</dbReference>
<dbReference type="CDD" id="cd10719">
    <property type="entry name" value="DnaJ_zf"/>
    <property type="match status" value="1"/>
</dbReference>
<dbReference type="FunFam" id="1.10.287.110:FF:000034">
    <property type="entry name" value="Chaperone protein DnaJ"/>
    <property type="match status" value="1"/>
</dbReference>
<dbReference type="FunFam" id="2.60.260.20:FF:000005">
    <property type="entry name" value="Chaperone protein dnaJ 1, mitochondrial"/>
    <property type="match status" value="1"/>
</dbReference>
<dbReference type="FunFam" id="2.10.230.10:FF:000002">
    <property type="entry name" value="Molecular chaperone DnaJ"/>
    <property type="match status" value="1"/>
</dbReference>
<dbReference type="Gene3D" id="1.10.287.110">
    <property type="entry name" value="DnaJ domain"/>
    <property type="match status" value="1"/>
</dbReference>
<dbReference type="Gene3D" id="2.10.230.10">
    <property type="entry name" value="Heat shock protein DnaJ, cysteine-rich domain"/>
    <property type="match status" value="1"/>
</dbReference>
<dbReference type="Gene3D" id="2.60.260.20">
    <property type="entry name" value="Urease metallochaperone UreE, N-terminal domain"/>
    <property type="match status" value="2"/>
</dbReference>
<dbReference type="HAMAP" id="MF_01152">
    <property type="entry name" value="DnaJ"/>
    <property type="match status" value="1"/>
</dbReference>
<dbReference type="InterPro" id="IPR012724">
    <property type="entry name" value="DnaJ"/>
</dbReference>
<dbReference type="InterPro" id="IPR002939">
    <property type="entry name" value="DnaJ_C"/>
</dbReference>
<dbReference type="InterPro" id="IPR001623">
    <property type="entry name" value="DnaJ_domain"/>
</dbReference>
<dbReference type="InterPro" id="IPR008971">
    <property type="entry name" value="HSP40/DnaJ_pept-bd"/>
</dbReference>
<dbReference type="InterPro" id="IPR001305">
    <property type="entry name" value="HSP_DnaJ_Cys-rich_dom"/>
</dbReference>
<dbReference type="InterPro" id="IPR036410">
    <property type="entry name" value="HSP_DnaJ_Cys-rich_dom_sf"/>
</dbReference>
<dbReference type="InterPro" id="IPR036869">
    <property type="entry name" value="J_dom_sf"/>
</dbReference>
<dbReference type="NCBIfam" id="TIGR02349">
    <property type="entry name" value="DnaJ_bact"/>
    <property type="match status" value="1"/>
</dbReference>
<dbReference type="NCBIfam" id="NF008035">
    <property type="entry name" value="PRK10767.1"/>
    <property type="match status" value="1"/>
</dbReference>
<dbReference type="NCBIfam" id="NF010886">
    <property type="entry name" value="PRK14293.1"/>
    <property type="match status" value="1"/>
</dbReference>
<dbReference type="PANTHER" id="PTHR43096:SF10">
    <property type="entry name" value="CHAPERONE PROTEIN DNAJ A6, CHLOROPLASTIC"/>
    <property type="match status" value="1"/>
</dbReference>
<dbReference type="PANTHER" id="PTHR43096">
    <property type="entry name" value="DNAJ HOMOLOG 1, MITOCHONDRIAL-RELATED"/>
    <property type="match status" value="1"/>
</dbReference>
<dbReference type="Pfam" id="PF00226">
    <property type="entry name" value="DnaJ"/>
    <property type="match status" value="1"/>
</dbReference>
<dbReference type="Pfam" id="PF01556">
    <property type="entry name" value="DnaJ_C"/>
    <property type="match status" value="1"/>
</dbReference>
<dbReference type="Pfam" id="PF00684">
    <property type="entry name" value="DnaJ_CXXCXGXG"/>
    <property type="match status" value="1"/>
</dbReference>
<dbReference type="PRINTS" id="PR00625">
    <property type="entry name" value="JDOMAIN"/>
</dbReference>
<dbReference type="SMART" id="SM00271">
    <property type="entry name" value="DnaJ"/>
    <property type="match status" value="1"/>
</dbReference>
<dbReference type="SUPFAM" id="SSF46565">
    <property type="entry name" value="Chaperone J-domain"/>
    <property type="match status" value="1"/>
</dbReference>
<dbReference type="SUPFAM" id="SSF57938">
    <property type="entry name" value="DnaJ/Hsp40 cysteine-rich domain"/>
    <property type="match status" value="1"/>
</dbReference>
<dbReference type="SUPFAM" id="SSF49493">
    <property type="entry name" value="HSP40/DnaJ peptide-binding domain"/>
    <property type="match status" value="2"/>
</dbReference>
<dbReference type="PROSITE" id="PS50076">
    <property type="entry name" value="DNAJ_2"/>
    <property type="match status" value="1"/>
</dbReference>
<dbReference type="PROSITE" id="PS51188">
    <property type="entry name" value="ZF_CR"/>
    <property type="match status" value="1"/>
</dbReference>
<comment type="function">
    <text evidence="1">Participates actively in the response to hyperosmotic and heat shock by preventing the aggregation of stress-denatured proteins and by disaggregating proteins, also in an autonomous, DnaK-independent fashion. Unfolded proteins bind initially to DnaJ; upon interaction with the DnaJ-bound protein, DnaK hydrolyzes its bound ATP, resulting in the formation of a stable complex. GrpE releases ADP from DnaK; ATP binding to DnaK triggers the release of the substrate protein, thus completing the reaction cycle. Several rounds of ATP-dependent interactions between DnaJ, DnaK and GrpE are required for fully efficient folding. Also involved, together with DnaK and GrpE, in the DNA replication of plasmids through activation of initiation proteins.</text>
</comment>
<comment type="cofactor">
    <cofactor evidence="1">
        <name>Zn(2+)</name>
        <dbReference type="ChEBI" id="CHEBI:29105"/>
    </cofactor>
    <text evidence="1">Binds 2 Zn(2+) ions per monomer.</text>
</comment>
<comment type="subunit">
    <text evidence="1">Homodimer.</text>
</comment>
<comment type="subcellular location">
    <subcellularLocation>
        <location evidence="1">Cytoplasm</location>
    </subcellularLocation>
</comment>
<comment type="domain">
    <text evidence="1">The J domain is necessary and sufficient to stimulate DnaK ATPase activity. Zinc center 1 plays an important role in the autonomous, DnaK-independent chaperone activity of DnaJ. Zinc center 2 is essential for interaction with DnaK and for DnaJ activity.</text>
</comment>
<comment type="similarity">
    <text evidence="1">Belongs to the DnaJ family.</text>
</comment>
<accession>Q3MG81</accession>
<organism>
    <name type="scientific">Trichormus variabilis (strain ATCC 29413 / PCC 7937)</name>
    <name type="common">Anabaena variabilis</name>
    <dbReference type="NCBI Taxonomy" id="240292"/>
    <lineage>
        <taxon>Bacteria</taxon>
        <taxon>Bacillati</taxon>
        <taxon>Cyanobacteriota</taxon>
        <taxon>Cyanophyceae</taxon>
        <taxon>Nostocales</taxon>
        <taxon>Nostocaceae</taxon>
        <taxon>Trichormus</taxon>
    </lineage>
</organism>
<evidence type="ECO:0000255" key="1">
    <source>
        <dbReference type="HAMAP-Rule" id="MF_01152"/>
    </source>
</evidence>
<evidence type="ECO:0000256" key="2">
    <source>
        <dbReference type="SAM" id="MobiDB-lite"/>
    </source>
</evidence>
<keyword id="KW-0143">Chaperone</keyword>
<keyword id="KW-0963">Cytoplasm</keyword>
<keyword id="KW-0235">DNA replication</keyword>
<keyword id="KW-0479">Metal-binding</keyword>
<keyword id="KW-0677">Repeat</keyword>
<keyword id="KW-0346">Stress response</keyword>
<keyword id="KW-0862">Zinc</keyword>
<keyword id="KW-0863">Zinc-finger</keyword>
<reference key="1">
    <citation type="journal article" date="2014" name="Stand. Genomic Sci.">
        <title>Complete genome sequence of Anabaena variabilis ATCC 29413.</title>
        <authorList>
            <person name="Thiel T."/>
            <person name="Pratte B.S."/>
            <person name="Zhong J."/>
            <person name="Goodwin L."/>
            <person name="Copeland A."/>
            <person name="Lucas S."/>
            <person name="Han C."/>
            <person name="Pitluck S."/>
            <person name="Land M.L."/>
            <person name="Kyrpides N.C."/>
            <person name="Woyke T."/>
        </authorList>
    </citation>
    <scope>NUCLEOTIDE SEQUENCE [LARGE SCALE GENOMIC DNA]</scope>
    <source>
        <strain>ATCC 29413 / PCC 7937</strain>
    </source>
</reference>